<comment type="subcellular location">
    <subcellularLocation>
        <location evidence="1">Nucleus</location>
    </subcellularLocation>
</comment>
<accession>Q23622</accession>
<dbReference type="EMBL" id="Z73899">
    <property type="protein sequence ID" value="CAA98075.1"/>
    <property type="molecule type" value="Genomic_DNA"/>
</dbReference>
<dbReference type="PIR" id="T28023">
    <property type="entry name" value="T28023"/>
</dbReference>
<dbReference type="RefSeq" id="NP_502266.1">
    <property type="nucleotide sequence ID" value="NM_069865.4"/>
</dbReference>
<dbReference type="SMR" id="Q23622"/>
<dbReference type="BioGRID" id="55971">
    <property type="interactions" value="1"/>
</dbReference>
<dbReference type="STRING" id="6239.ZK829.5.1"/>
<dbReference type="PaxDb" id="6239-ZK829.5"/>
<dbReference type="EnsemblMetazoa" id="ZK829.5.1">
    <property type="protein sequence ID" value="ZK829.5.1"/>
    <property type="gene ID" value="WBGene00006555"/>
</dbReference>
<dbReference type="GeneID" id="191435"/>
<dbReference type="KEGG" id="cel:CELE_ZK829.5"/>
<dbReference type="UCSC" id="ZK829.5">
    <property type="organism name" value="c. elegans"/>
</dbReference>
<dbReference type="AGR" id="WB:WBGene00006555"/>
<dbReference type="CTD" id="191435"/>
<dbReference type="WormBase" id="ZK829.5">
    <property type="protein sequence ID" value="CE06653"/>
    <property type="gene ID" value="WBGene00006555"/>
    <property type="gene designation" value="tbx-36"/>
</dbReference>
<dbReference type="eggNOG" id="KOG3585">
    <property type="taxonomic scope" value="Eukaryota"/>
</dbReference>
<dbReference type="HOGENOM" id="CLU_840016_0_0_1"/>
<dbReference type="InParanoid" id="Q23622"/>
<dbReference type="PhylomeDB" id="Q23622"/>
<dbReference type="PRO" id="PR:Q23622"/>
<dbReference type="Proteomes" id="UP000001940">
    <property type="component" value="Chromosome IV"/>
</dbReference>
<dbReference type="Bgee" id="WBGene00006555">
    <property type="expression patterns" value="Expressed in germ line (C elegans) and 3 other cell types or tissues"/>
</dbReference>
<dbReference type="GO" id="GO:0000785">
    <property type="term" value="C:chromatin"/>
    <property type="evidence" value="ECO:0000318"/>
    <property type="project" value="GO_Central"/>
</dbReference>
<dbReference type="GO" id="GO:0005634">
    <property type="term" value="C:nucleus"/>
    <property type="evidence" value="ECO:0000318"/>
    <property type="project" value="GO_Central"/>
</dbReference>
<dbReference type="GO" id="GO:0000981">
    <property type="term" value="F:DNA-binding transcription factor activity, RNA polymerase II-specific"/>
    <property type="evidence" value="ECO:0000318"/>
    <property type="project" value="GO_Central"/>
</dbReference>
<dbReference type="GO" id="GO:0000978">
    <property type="term" value="F:RNA polymerase II cis-regulatory region sequence-specific DNA binding"/>
    <property type="evidence" value="ECO:0000318"/>
    <property type="project" value="GO_Central"/>
</dbReference>
<dbReference type="GO" id="GO:0001708">
    <property type="term" value="P:cell fate specification"/>
    <property type="evidence" value="ECO:0000318"/>
    <property type="project" value="GO_Central"/>
</dbReference>
<dbReference type="GO" id="GO:0045893">
    <property type="term" value="P:positive regulation of DNA-templated transcription"/>
    <property type="evidence" value="ECO:0007669"/>
    <property type="project" value="InterPro"/>
</dbReference>
<dbReference type="GO" id="GO:0006357">
    <property type="term" value="P:regulation of transcription by RNA polymerase II"/>
    <property type="evidence" value="ECO:0000318"/>
    <property type="project" value="GO_Central"/>
</dbReference>
<dbReference type="CDD" id="cd00182">
    <property type="entry name" value="T-box"/>
    <property type="match status" value="1"/>
</dbReference>
<dbReference type="Gene3D" id="2.60.40.820">
    <property type="entry name" value="Transcription factor, T-box"/>
    <property type="match status" value="1"/>
</dbReference>
<dbReference type="InterPro" id="IPR008967">
    <property type="entry name" value="p53-like_TF_DNA-bd_sf"/>
</dbReference>
<dbReference type="InterPro" id="IPR046360">
    <property type="entry name" value="T-box_DNA-bd"/>
</dbReference>
<dbReference type="InterPro" id="IPR036960">
    <property type="entry name" value="T-box_sf"/>
</dbReference>
<dbReference type="Pfam" id="PF00907">
    <property type="entry name" value="T-box"/>
    <property type="match status" value="1"/>
</dbReference>
<dbReference type="SMART" id="SM00425">
    <property type="entry name" value="TBOX"/>
    <property type="match status" value="1"/>
</dbReference>
<dbReference type="SUPFAM" id="SSF49417">
    <property type="entry name" value="p53-like transcription factors"/>
    <property type="match status" value="1"/>
</dbReference>
<dbReference type="PROSITE" id="PS50252">
    <property type="entry name" value="TBOX_3"/>
    <property type="match status" value="1"/>
</dbReference>
<evidence type="ECO:0000255" key="1">
    <source>
        <dbReference type="PROSITE-ProRule" id="PRU00201"/>
    </source>
</evidence>
<protein>
    <recommendedName>
        <fullName>Putative T-box protein 36</fullName>
    </recommendedName>
</protein>
<sequence>MNEPTYNYNDFLMPALADGQPDISIEISEITKKQWNQLIGIHEVVVYKDCRKLFPAAKFSVRGLDPALLYSVEICFDVLSPFTFSYNKKLEKWIPTKTPVNCQSSALSSMICETGDWFMNGDMDFGALNITSSHEKAKEKIEQNRIAVCLSSRTMYQIRVVLYEMQNDELIYLKETKFDEMIFITCTEYRGQVNRELKKSMNRFSRKRKYEISGTKCQRSKRPAKLPVESLDEKELKNAEKGIMSLLESSPSSPSYLYQYQYNSPQSIPSSIYDSLYPSSPEEYQMVHTFPQTDQLSPSFQTSPTVHYDFYNQQYYDNSFHENYFQSYNRL</sequence>
<reference key="1">
    <citation type="journal article" date="1998" name="Science">
        <title>Genome sequence of the nematode C. elegans: a platform for investigating biology.</title>
        <authorList>
            <consortium name="The C. elegans sequencing consortium"/>
        </authorList>
    </citation>
    <scope>NUCLEOTIDE SEQUENCE [LARGE SCALE GENOMIC DNA]</scope>
    <source>
        <strain>Bristol N2</strain>
    </source>
</reference>
<proteinExistence type="inferred from homology"/>
<organism>
    <name type="scientific">Caenorhabditis elegans</name>
    <dbReference type="NCBI Taxonomy" id="6239"/>
    <lineage>
        <taxon>Eukaryota</taxon>
        <taxon>Metazoa</taxon>
        <taxon>Ecdysozoa</taxon>
        <taxon>Nematoda</taxon>
        <taxon>Chromadorea</taxon>
        <taxon>Rhabditida</taxon>
        <taxon>Rhabditina</taxon>
        <taxon>Rhabditomorpha</taxon>
        <taxon>Rhabditoidea</taxon>
        <taxon>Rhabditidae</taxon>
        <taxon>Peloderinae</taxon>
        <taxon>Caenorhabditis</taxon>
    </lineage>
</organism>
<gene>
    <name type="primary">tbx-36</name>
    <name type="ORF">ZK829.5</name>
</gene>
<name>TBX36_CAEEL</name>
<keyword id="KW-0238">DNA-binding</keyword>
<keyword id="KW-0539">Nucleus</keyword>
<keyword id="KW-1185">Reference proteome</keyword>
<keyword id="KW-0804">Transcription</keyword>
<keyword id="KW-0805">Transcription regulation</keyword>
<feature type="chain" id="PRO_0000184481" description="Putative T-box protein 36">
    <location>
        <begin position="1"/>
        <end position="331"/>
    </location>
</feature>
<feature type="DNA-binding region" description="T-box" evidence="1">
    <location>
        <begin position="29"/>
        <end position="210"/>
    </location>
</feature>